<protein>
    <recommendedName>
        <fullName>Transmembrane protein 130</fullName>
    </recommendedName>
</protein>
<organism>
    <name type="scientific">Pongo abelii</name>
    <name type="common">Sumatran orangutan</name>
    <name type="synonym">Pongo pygmaeus abelii</name>
    <dbReference type="NCBI Taxonomy" id="9601"/>
    <lineage>
        <taxon>Eukaryota</taxon>
        <taxon>Metazoa</taxon>
        <taxon>Chordata</taxon>
        <taxon>Craniata</taxon>
        <taxon>Vertebrata</taxon>
        <taxon>Euteleostomi</taxon>
        <taxon>Mammalia</taxon>
        <taxon>Eutheria</taxon>
        <taxon>Euarchontoglires</taxon>
        <taxon>Primates</taxon>
        <taxon>Haplorrhini</taxon>
        <taxon>Catarrhini</taxon>
        <taxon>Hominidae</taxon>
        <taxon>Pongo</taxon>
    </lineage>
</organism>
<keyword id="KW-0325">Glycoprotein</keyword>
<keyword id="KW-0333">Golgi apparatus</keyword>
<keyword id="KW-0472">Membrane</keyword>
<keyword id="KW-1185">Reference proteome</keyword>
<keyword id="KW-0732">Signal</keyword>
<keyword id="KW-0812">Transmembrane</keyword>
<keyword id="KW-1133">Transmembrane helix</keyword>
<gene>
    <name type="primary">TMEM130</name>
</gene>
<feature type="signal peptide" evidence="2">
    <location>
        <begin position="1"/>
        <end position="24"/>
    </location>
</feature>
<feature type="chain" id="PRO_0000278278" description="Transmembrane protein 130">
    <location>
        <begin position="25"/>
        <end position="423"/>
    </location>
</feature>
<feature type="topological domain" description="Extracellular" evidence="2">
    <location>
        <begin position="25"/>
        <end position="339"/>
    </location>
</feature>
<feature type="transmembrane region" description="Helical" evidence="2">
    <location>
        <begin position="340"/>
        <end position="360"/>
    </location>
</feature>
<feature type="topological domain" description="Cytoplasmic" evidence="2">
    <location>
        <begin position="361"/>
        <end position="423"/>
    </location>
</feature>
<feature type="domain" description="PKD" evidence="3">
    <location>
        <begin position="147"/>
        <end position="233"/>
    </location>
</feature>
<feature type="glycosylation site" description="N-linked (GlcNAc...) asparagine" evidence="2">
    <location>
        <position position="34"/>
    </location>
</feature>
<feature type="glycosylation site" description="N-linked (GlcNAc...) asparagine" evidence="2">
    <location>
        <position position="197"/>
    </location>
</feature>
<feature type="glycosylation site" description="N-linked (GlcNAc...) asparagine" evidence="2">
    <location>
        <position position="300"/>
    </location>
</feature>
<evidence type="ECO:0000250" key="1"/>
<evidence type="ECO:0000255" key="2"/>
<evidence type="ECO:0000255" key="3">
    <source>
        <dbReference type="PROSITE-ProRule" id="PRU00151"/>
    </source>
</evidence>
<proteinExistence type="evidence at transcript level"/>
<comment type="subcellular location">
    <subcellularLocation>
        <location evidence="1">Golgi apparatus membrane</location>
        <topology evidence="1">Single-pass type I membrane protein</topology>
    </subcellularLocation>
</comment>
<reference key="1">
    <citation type="submission" date="2004-11" db="EMBL/GenBank/DDBJ databases">
        <authorList>
            <consortium name="The German cDNA consortium"/>
        </authorList>
    </citation>
    <scope>NUCLEOTIDE SEQUENCE [LARGE SCALE MRNA]</scope>
    <source>
        <tissue>Brain cortex</tissue>
    </source>
</reference>
<accession>Q5R6F5</accession>
<name>TM130_PONAB</name>
<dbReference type="EMBL" id="CR860535">
    <property type="protein sequence ID" value="CAH92661.1"/>
    <property type="molecule type" value="mRNA"/>
</dbReference>
<dbReference type="RefSeq" id="NP_001126556.1">
    <property type="nucleotide sequence ID" value="NM_001133084.1"/>
</dbReference>
<dbReference type="FunCoup" id="Q5R6F5">
    <property type="interactions" value="233"/>
</dbReference>
<dbReference type="STRING" id="9601.ENSPPYP00000019456"/>
<dbReference type="GlyCosmos" id="Q5R6F5">
    <property type="glycosylation" value="3 sites, No reported glycans"/>
</dbReference>
<dbReference type="GeneID" id="100173547"/>
<dbReference type="KEGG" id="pon:100173547"/>
<dbReference type="CTD" id="222865"/>
<dbReference type="eggNOG" id="ENOG502QSPZ">
    <property type="taxonomic scope" value="Eukaryota"/>
</dbReference>
<dbReference type="InParanoid" id="Q5R6F5"/>
<dbReference type="OrthoDB" id="8510435at2759"/>
<dbReference type="Proteomes" id="UP000001595">
    <property type="component" value="Unplaced"/>
</dbReference>
<dbReference type="GO" id="GO:0000139">
    <property type="term" value="C:Golgi membrane"/>
    <property type="evidence" value="ECO:0007669"/>
    <property type="project" value="UniProtKB-SubCell"/>
</dbReference>
<dbReference type="GO" id="GO:0005886">
    <property type="term" value="C:plasma membrane"/>
    <property type="evidence" value="ECO:0007669"/>
    <property type="project" value="TreeGrafter"/>
</dbReference>
<dbReference type="CDD" id="cd00146">
    <property type="entry name" value="PKD"/>
    <property type="match status" value="1"/>
</dbReference>
<dbReference type="FunFam" id="2.60.40.10:FF:000668">
    <property type="entry name" value="transmembrane protein 130 isoform X2"/>
    <property type="match status" value="1"/>
</dbReference>
<dbReference type="Gene3D" id="2.60.40.10">
    <property type="entry name" value="Immunoglobulins"/>
    <property type="match status" value="1"/>
</dbReference>
<dbReference type="InterPro" id="IPR013783">
    <property type="entry name" value="Ig-like_fold"/>
</dbReference>
<dbReference type="InterPro" id="IPR045219">
    <property type="entry name" value="PKAT"/>
</dbReference>
<dbReference type="InterPro" id="IPR046846">
    <property type="entry name" value="PKAT_KLD"/>
</dbReference>
<dbReference type="InterPro" id="IPR000601">
    <property type="entry name" value="PKD_dom"/>
</dbReference>
<dbReference type="InterPro" id="IPR035986">
    <property type="entry name" value="PKD_dom_sf"/>
</dbReference>
<dbReference type="PANTHER" id="PTHR11861">
    <property type="entry name" value="MELANOCYTE PROTEIN PMEL 17-RELATED"/>
    <property type="match status" value="1"/>
</dbReference>
<dbReference type="PANTHER" id="PTHR11861:SF10">
    <property type="entry name" value="TRANSMEMBRANE PROTEIN 130"/>
    <property type="match status" value="1"/>
</dbReference>
<dbReference type="Pfam" id="PF20433">
    <property type="entry name" value="PKAT_KLD"/>
    <property type="match status" value="1"/>
</dbReference>
<dbReference type="Pfam" id="PF00801">
    <property type="entry name" value="PKD"/>
    <property type="match status" value="1"/>
</dbReference>
<dbReference type="SUPFAM" id="SSF49299">
    <property type="entry name" value="PKD domain"/>
    <property type="match status" value="2"/>
</dbReference>
<dbReference type="PROSITE" id="PS50093">
    <property type="entry name" value="PKD"/>
    <property type="match status" value="1"/>
</dbReference>
<sequence>MAQAVWSRLGRILWLSCLLPWAPAGVAAGLYELNLTTDSPATTGAEVTISASLVAKDNGSLALPADAHLYRFHWIHTPLVLTGKAEKGLSSTIRVVGHVPGEFPVSVWVTASDCWMCQPVARGFVVLHITEFLVGDLVVTQNTSLPWPSSYLTKTILKVSFLLHDPSDFLKTALFLYSWDFGDGTQMVTEDSVVYYNYSIIGTFTVKLKVVAEWEEVKPDATKAVMQKTGDFSASLKLQETLRGIQVLGPTLIQTFQKMTLTLNFLGSPPLTVCWRLKPECLPLEEGECHPVSVASTAYNLTHTFRDPGDYCFSIRAENIISKTHQYHRIQVWPSRIQPAVFAFPCATLITVMLAFIMYMTLRNATQQKDMVENPEPPSGVRCCCQMCCGPFLLETPSEYLEIVRENHGLLPPLYKSVKTYTV</sequence>